<gene>
    <name type="primary">SUVR1</name>
    <name type="synonym">SDG13</name>
    <name type="synonym">SET13</name>
    <name type="ordered locus">At1g04050</name>
    <name type="ORF">F20D22.16</name>
    <name type="ORF">F21M11.1</name>
</gene>
<name>SUVR1_ARATH</name>
<feature type="chain" id="PRO_0000233365" description="Probable inactive histone-lysine N-methyltransferase SUVR1">
    <location>
        <begin position="1"/>
        <end position="734"/>
    </location>
</feature>
<feature type="domain" description="Pre-SET" evidence="4">
    <location>
        <begin position="460"/>
        <end position="563"/>
    </location>
</feature>
<feature type="domain" description="SET" evidence="5">
    <location>
        <begin position="566"/>
        <end position="696"/>
    </location>
</feature>
<feature type="domain" description="Post-SET">
    <location>
        <begin position="707"/>
        <end position="723"/>
    </location>
</feature>
<feature type="region of interest" description="Disordered" evidence="7">
    <location>
        <begin position="61"/>
        <end position="163"/>
    </location>
</feature>
<feature type="compositionally biased region" description="Basic and acidic residues" evidence="7">
    <location>
        <begin position="62"/>
        <end position="81"/>
    </location>
</feature>
<feature type="compositionally biased region" description="Acidic residues" evidence="7">
    <location>
        <begin position="98"/>
        <end position="109"/>
    </location>
</feature>
<feature type="compositionally biased region" description="Basic residues" evidence="7">
    <location>
        <begin position="113"/>
        <end position="122"/>
    </location>
</feature>
<feature type="compositionally biased region" description="Low complexity" evidence="7">
    <location>
        <begin position="123"/>
        <end position="132"/>
    </location>
</feature>
<feature type="binding site" evidence="3">
    <location>
        <position position="460"/>
    </location>
    <ligand>
        <name>Zn(2+)</name>
        <dbReference type="ChEBI" id="CHEBI:29105"/>
        <label>1</label>
    </ligand>
</feature>
<feature type="binding site" evidence="3">
    <location>
        <position position="464"/>
    </location>
    <ligand>
        <name>Zn(2+)</name>
        <dbReference type="ChEBI" id="CHEBI:29105"/>
        <label>1</label>
    </ligand>
</feature>
<feature type="binding site" evidence="3">
    <location>
        <position position="464"/>
    </location>
    <ligand>
        <name>Zn(2+)</name>
        <dbReference type="ChEBI" id="CHEBI:29105"/>
        <label>3</label>
    </ligand>
</feature>
<feature type="binding site" evidence="3">
    <location>
        <position position="468"/>
    </location>
    <ligand>
        <name>Zn(2+)</name>
        <dbReference type="ChEBI" id="CHEBI:29105"/>
        <label>1</label>
    </ligand>
</feature>
<feature type="binding site" evidence="3">
    <location>
        <position position="477"/>
    </location>
    <ligand>
        <name>Zn(2+)</name>
        <dbReference type="ChEBI" id="CHEBI:29105"/>
        <label>2</label>
    </ligand>
</feature>
<feature type="binding site" evidence="3">
    <location>
        <position position="545"/>
    </location>
    <ligand>
        <name>Zn(2+)</name>
        <dbReference type="ChEBI" id="CHEBI:29105"/>
        <label>2</label>
    </ligand>
</feature>
<feature type="binding site" evidence="3">
    <location>
        <position position="545"/>
    </location>
    <ligand>
        <name>Zn(2+)</name>
        <dbReference type="ChEBI" id="CHEBI:29105"/>
        <label>3</label>
    </ligand>
</feature>
<feature type="binding site" evidence="3">
    <location>
        <position position="549"/>
    </location>
    <ligand>
        <name>Zn(2+)</name>
        <dbReference type="ChEBI" id="CHEBI:29105"/>
        <label>2</label>
    </ligand>
</feature>
<feature type="binding site" evidence="3">
    <location>
        <position position="551"/>
    </location>
    <ligand>
        <name>Zn(2+)</name>
        <dbReference type="ChEBI" id="CHEBI:29105"/>
        <label>3</label>
    </ligand>
</feature>
<feature type="binding site" evidence="3">
    <location>
        <position position="555"/>
    </location>
    <ligand>
        <name>Zn(2+)</name>
        <dbReference type="ChEBI" id="CHEBI:29105"/>
        <label>3</label>
    </ligand>
</feature>
<feature type="binding site" evidence="3">
    <location>
        <begin position="577"/>
        <end position="579"/>
    </location>
    <ligand>
        <name>S-adenosyl-L-methionine</name>
        <dbReference type="ChEBI" id="CHEBI:59789"/>
    </ligand>
</feature>
<feature type="binding site" evidence="3">
    <location>
        <begin position="652"/>
        <end position="653"/>
    </location>
    <ligand>
        <name>S-adenosyl-L-methionine</name>
        <dbReference type="ChEBI" id="CHEBI:59789"/>
    </ligand>
</feature>
<feature type="binding site" evidence="3">
    <location>
        <position position="655"/>
    </location>
    <ligand>
        <name>Zn(2+)</name>
        <dbReference type="ChEBI" id="CHEBI:29105"/>
        <label>4</label>
    </ligand>
</feature>
<feature type="binding site" evidence="5">
    <location>
        <position position="695"/>
    </location>
    <ligand>
        <name>S-adenosyl-L-methionine</name>
        <dbReference type="ChEBI" id="CHEBI:59789"/>
    </ligand>
</feature>
<feature type="binding site" evidence="3">
    <location>
        <position position="711"/>
    </location>
    <ligand>
        <name>Zn(2+)</name>
        <dbReference type="ChEBI" id="CHEBI:29105"/>
        <label>4</label>
    </ligand>
</feature>
<feature type="binding site" evidence="3">
    <location>
        <position position="713"/>
    </location>
    <ligand>
        <name>Zn(2+)</name>
        <dbReference type="ChEBI" id="CHEBI:29105"/>
        <label>4</label>
    </ligand>
</feature>
<feature type="binding site" evidence="3">
    <location>
        <position position="718"/>
    </location>
    <ligand>
        <name>Zn(2+)</name>
        <dbReference type="ChEBI" id="CHEBI:29105"/>
        <label>4</label>
    </ligand>
</feature>
<accession>Q946J2</accession>
<accession>O64498</accession>
<accession>Q9SAW1</accession>
<sequence length="734" mass="82753">MAPNLRIKKACDAMKLLGISETKTRAFLRKLLKTYENNWDFIEEDAYKVLLDAIFDEADAQSTEKNKKEEEKKKKEEEKKSRSVATSRGRRKAPEPLVQDEEDDMDEDEFPLKRRLRSRRGRASSSSSSSSSYNNEDLKTQPEEEDEDDGVTELPPLKRYVRRNGERGLAMTVYNNASPSSSSRLSMEPEEVPPMVLLPAHPMETKVSEASALVILNDEPNIDHKPVISDTGNCSAPMLEMGKSNIHVQEWDWETKDILNDTTAMDVSPSSAIGESSEHKVAAASVELASSTSGEAKICLSFAPATGETTNLHLPSMEDLRRAMEEKCLKSYKIVHPEFSVLGFMKDMCSCYIDLAKNSTSQLLETETVCDMSKAGDESGAVGISMPLVVVPECEISGDGWKAISNMKDITAGEENVEIPWVNEINEKVPSRFRYMPHSFVFQDAPVIFSLSSFSDEQSCSTSCIEDCLASEMSCNCAIGVDNGFAYTLDGLLKEEFLEARISEARDQRKQVLRFCEECPLERAKKVEILEPCKGHLKRGAIKECWFKCGCTKRCGNRVVQRGMHNKLQVFFTPNGKGWGLRTLEKLPKGAFICEYIGEILTIPELYQRSFEDKPTLPVILDAHWGSEERLEGDKALCLDGMFYGNISRFLNHRCLDANLIEIPVQVETPDQHYYHLAFFTTRDIEAMEELAWDYGIDFNDNDSLMKPFDCLCGSRFCRNKKRSTKTMQILNKA</sequence>
<proteinExistence type="evidence at protein level"/>
<organism>
    <name type="scientific">Arabidopsis thaliana</name>
    <name type="common">Mouse-ear cress</name>
    <dbReference type="NCBI Taxonomy" id="3702"/>
    <lineage>
        <taxon>Eukaryota</taxon>
        <taxon>Viridiplantae</taxon>
        <taxon>Streptophyta</taxon>
        <taxon>Embryophyta</taxon>
        <taxon>Tracheophyta</taxon>
        <taxon>Spermatophyta</taxon>
        <taxon>Magnoliopsida</taxon>
        <taxon>eudicotyledons</taxon>
        <taxon>Gunneridae</taxon>
        <taxon>Pentapetalae</taxon>
        <taxon>rosids</taxon>
        <taxon>malvids</taxon>
        <taxon>Brassicales</taxon>
        <taxon>Brassicaceae</taxon>
        <taxon>Camelineae</taxon>
        <taxon>Arabidopsis</taxon>
    </lineage>
</organism>
<dbReference type="EMBL" id="AC002411">
    <property type="protein sequence ID" value="AAC16755.1"/>
    <property type="status" value="ALT_SEQ"/>
    <property type="molecule type" value="Genomic_DNA"/>
</dbReference>
<dbReference type="EMBL" id="AC003027">
    <property type="protein sequence ID" value="AAD10665.1"/>
    <property type="molecule type" value="Genomic_DNA"/>
</dbReference>
<dbReference type="EMBL" id="CP002684">
    <property type="protein sequence ID" value="AEE27650.1"/>
    <property type="molecule type" value="Genomic_DNA"/>
</dbReference>
<dbReference type="EMBL" id="CP002684">
    <property type="protein sequence ID" value="ANM58278.1"/>
    <property type="molecule type" value="Genomic_DNA"/>
</dbReference>
<dbReference type="EMBL" id="AF394239">
    <property type="protein sequence ID" value="AAK77165.1"/>
    <property type="status" value="ALT_INIT"/>
    <property type="molecule type" value="mRNA"/>
</dbReference>
<dbReference type="PIR" id="G86171">
    <property type="entry name" value="G86171"/>
</dbReference>
<dbReference type="PIR" id="T00966">
    <property type="entry name" value="T00966"/>
</dbReference>
<dbReference type="RefSeq" id="NP_001320724.1">
    <property type="nucleotide sequence ID" value="NM_001331459.1"/>
</dbReference>
<dbReference type="RefSeq" id="NP_001320725.1">
    <property type="nucleotide sequence ID" value="NM_001331458.1"/>
</dbReference>
<dbReference type="RefSeq" id="NP_171901.3">
    <property type="nucleotide sequence ID" value="NM_100286.4"/>
</dbReference>
<dbReference type="SMR" id="Q946J2"/>
<dbReference type="BioGRID" id="24555">
    <property type="interactions" value="7"/>
</dbReference>
<dbReference type="FunCoup" id="Q946J2">
    <property type="interactions" value="635"/>
</dbReference>
<dbReference type="IntAct" id="Q946J2">
    <property type="interactions" value="4"/>
</dbReference>
<dbReference type="STRING" id="3702.Q946J2"/>
<dbReference type="iPTMnet" id="Q946J2"/>
<dbReference type="PaxDb" id="3702-AT1G04050.1"/>
<dbReference type="ProteomicsDB" id="226527"/>
<dbReference type="EnsemblPlants" id="AT1G04050.1">
    <property type="protein sequence ID" value="AT1G04050.1"/>
    <property type="gene ID" value="AT1G04050"/>
</dbReference>
<dbReference type="EnsemblPlants" id="AT1G04050.2">
    <property type="protein sequence ID" value="AT1G04050.2"/>
    <property type="gene ID" value="AT1G04050"/>
</dbReference>
<dbReference type="GeneID" id="839320"/>
<dbReference type="Gramene" id="AT1G04050.1">
    <property type="protein sequence ID" value="AT1G04050.1"/>
    <property type="gene ID" value="AT1G04050"/>
</dbReference>
<dbReference type="Gramene" id="AT1G04050.2">
    <property type="protein sequence ID" value="AT1G04050.2"/>
    <property type="gene ID" value="AT1G04050"/>
</dbReference>
<dbReference type="KEGG" id="ath:AT1G04050"/>
<dbReference type="Araport" id="AT1G04050"/>
<dbReference type="TAIR" id="AT1G04050">
    <property type="gene designation" value="SUVR1"/>
</dbReference>
<dbReference type="eggNOG" id="KOG1082">
    <property type="taxonomic scope" value="Eukaryota"/>
</dbReference>
<dbReference type="HOGENOM" id="CLU_011618_0_0_1"/>
<dbReference type="InParanoid" id="Q946J2"/>
<dbReference type="OMA" id="ACDAMKL"/>
<dbReference type="PRO" id="PR:Q946J2"/>
<dbReference type="Proteomes" id="UP000006548">
    <property type="component" value="Chromosome 1"/>
</dbReference>
<dbReference type="ExpressionAtlas" id="Q946J2">
    <property type="expression patterns" value="baseline and differential"/>
</dbReference>
<dbReference type="GO" id="GO:0005694">
    <property type="term" value="C:chromosome"/>
    <property type="evidence" value="ECO:0007669"/>
    <property type="project" value="UniProtKB-SubCell"/>
</dbReference>
<dbReference type="GO" id="GO:0005730">
    <property type="term" value="C:nucleolus"/>
    <property type="evidence" value="ECO:0000314"/>
    <property type="project" value="TAIR"/>
</dbReference>
<dbReference type="GO" id="GO:0042054">
    <property type="term" value="F:histone methyltransferase activity"/>
    <property type="evidence" value="ECO:0007669"/>
    <property type="project" value="InterPro"/>
</dbReference>
<dbReference type="GO" id="GO:0042802">
    <property type="term" value="F:identical protein binding"/>
    <property type="evidence" value="ECO:0000353"/>
    <property type="project" value="UniProtKB"/>
</dbReference>
<dbReference type="GO" id="GO:0008270">
    <property type="term" value="F:zinc ion binding"/>
    <property type="evidence" value="ECO:0007669"/>
    <property type="project" value="InterPro"/>
</dbReference>
<dbReference type="GO" id="GO:0032259">
    <property type="term" value="P:methylation"/>
    <property type="evidence" value="ECO:0007669"/>
    <property type="project" value="UniProtKB-KW"/>
</dbReference>
<dbReference type="GO" id="GO:0031047">
    <property type="term" value="P:regulatory ncRNA-mediated gene silencing"/>
    <property type="evidence" value="ECO:0007669"/>
    <property type="project" value="UniProtKB-KW"/>
</dbReference>
<dbReference type="CDD" id="cd10538">
    <property type="entry name" value="SET_SETDB-like"/>
    <property type="match status" value="1"/>
</dbReference>
<dbReference type="FunFam" id="2.170.270.10:FF:000046">
    <property type="entry name" value="SET-domain containing protein lysine methyltransferase family protein"/>
    <property type="match status" value="1"/>
</dbReference>
<dbReference type="Gene3D" id="1.10.8.850">
    <property type="entry name" value="Histone-lysine N methyltransferase , C-terminal domain-like"/>
    <property type="match status" value="1"/>
</dbReference>
<dbReference type="Gene3D" id="2.170.270.10">
    <property type="entry name" value="SET domain"/>
    <property type="match status" value="1"/>
</dbReference>
<dbReference type="InterPro" id="IPR007728">
    <property type="entry name" value="Pre-SET_dom"/>
</dbReference>
<dbReference type="InterPro" id="IPR001214">
    <property type="entry name" value="SET_dom"/>
</dbReference>
<dbReference type="InterPro" id="IPR046341">
    <property type="entry name" value="SET_dom_sf"/>
</dbReference>
<dbReference type="InterPro" id="IPR025776">
    <property type="entry name" value="SUVR4/1/2"/>
</dbReference>
<dbReference type="InterPro" id="IPR043017">
    <property type="entry name" value="WIYLD_dom_sf"/>
</dbReference>
<dbReference type="InterPro" id="IPR018848">
    <property type="entry name" value="WIYLD_domain"/>
</dbReference>
<dbReference type="PANTHER" id="PTHR46450">
    <property type="entry name" value="INACTIVE HISTONE-LYSINE N-METHYLTRANSFERASE SUVR1-RELATED"/>
    <property type="match status" value="1"/>
</dbReference>
<dbReference type="PANTHER" id="PTHR46450:SF1">
    <property type="entry name" value="INACTIVE HISTONE-LYSINE N-METHYLTRANSFERASE SUVR1-RELATED"/>
    <property type="match status" value="1"/>
</dbReference>
<dbReference type="Pfam" id="PF05033">
    <property type="entry name" value="Pre-SET"/>
    <property type="match status" value="1"/>
</dbReference>
<dbReference type="Pfam" id="PF00856">
    <property type="entry name" value="SET"/>
    <property type="match status" value="1"/>
</dbReference>
<dbReference type="Pfam" id="PF10440">
    <property type="entry name" value="WIYLD"/>
    <property type="match status" value="1"/>
</dbReference>
<dbReference type="SMART" id="SM00468">
    <property type="entry name" value="PreSET"/>
    <property type="match status" value="1"/>
</dbReference>
<dbReference type="SMART" id="SM00317">
    <property type="entry name" value="SET"/>
    <property type="match status" value="1"/>
</dbReference>
<dbReference type="SUPFAM" id="SSF82199">
    <property type="entry name" value="SET domain"/>
    <property type="match status" value="1"/>
</dbReference>
<dbReference type="PROSITE" id="PS50867">
    <property type="entry name" value="PRE_SET"/>
    <property type="match status" value="1"/>
</dbReference>
<dbReference type="PROSITE" id="PS51580">
    <property type="entry name" value="SAM_MT43_3"/>
    <property type="match status" value="1"/>
</dbReference>
<dbReference type="PROSITE" id="PS50280">
    <property type="entry name" value="SET"/>
    <property type="match status" value="1"/>
</dbReference>
<reference key="1">
    <citation type="journal article" date="2000" name="Nature">
        <title>Sequence and analysis of chromosome 1 of the plant Arabidopsis thaliana.</title>
        <authorList>
            <person name="Theologis A."/>
            <person name="Ecker J.R."/>
            <person name="Palm C.J."/>
            <person name="Federspiel N.A."/>
            <person name="Kaul S."/>
            <person name="White O."/>
            <person name="Alonso J."/>
            <person name="Altafi H."/>
            <person name="Araujo R."/>
            <person name="Bowman C.L."/>
            <person name="Brooks S.Y."/>
            <person name="Buehler E."/>
            <person name="Chan A."/>
            <person name="Chao Q."/>
            <person name="Chen H."/>
            <person name="Cheuk R.F."/>
            <person name="Chin C.W."/>
            <person name="Chung M.K."/>
            <person name="Conn L."/>
            <person name="Conway A.B."/>
            <person name="Conway A.R."/>
            <person name="Creasy T.H."/>
            <person name="Dewar K."/>
            <person name="Dunn P."/>
            <person name="Etgu P."/>
            <person name="Feldblyum T.V."/>
            <person name="Feng J.-D."/>
            <person name="Fong B."/>
            <person name="Fujii C.Y."/>
            <person name="Gill J.E."/>
            <person name="Goldsmith A.D."/>
            <person name="Haas B."/>
            <person name="Hansen N.F."/>
            <person name="Hughes B."/>
            <person name="Huizar L."/>
            <person name="Hunter J.L."/>
            <person name="Jenkins J."/>
            <person name="Johnson-Hopson C."/>
            <person name="Khan S."/>
            <person name="Khaykin E."/>
            <person name="Kim C.J."/>
            <person name="Koo H.L."/>
            <person name="Kremenetskaia I."/>
            <person name="Kurtz D.B."/>
            <person name="Kwan A."/>
            <person name="Lam B."/>
            <person name="Langin-Hooper S."/>
            <person name="Lee A."/>
            <person name="Lee J.M."/>
            <person name="Lenz C.A."/>
            <person name="Li J.H."/>
            <person name="Li Y.-P."/>
            <person name="Lin X."/>
            <person name="Liu S.X."/>
            <person name="Liu Z.A."/>
            <person name="Luros J.S."/>
            <person name="Maiti R."/>
            <person name="Marziali A."/>
            <person name="Militscher J."/>
            <person name="Miranda M."/>
            <person name="Nguyen M."/>
            <person name="Nierman W.C."/>
            <person name="Osborne B.I."/>
            <person name="Pai G."/>
            <person name="Peterson J."/>
            <person name="Pham P.K."/>
            <person name="Rizzo M."/>
            <person name="Rooney T."/>
            <person name="Rowley D."/>
            <person name="Sakano H."/>
            <person name="Salzberg S.L."/>
            <person name="Schwartz J.R."/>
            <person name="Shinn P."/>
            <person name="Southwick A.M."/>
            <person name="Sun H."/>
            <person name="Tallon L.J."/>
            <person name="Tambunga G."/>
            <person name="Toriumi M.J."/>
            <person name="Town C.D."/>
            <person name="Utterback T."/>
            <person name="Van Aken S."/>
            <person name="Vaysberg M."/>
            <person name="Vysotskaia V.S."/>
            <person name="Walker M."/>
            <person name="Wu D."/>
            <person name="Yu G."/>
            <person name="Fraser C.M."/>
            <person name="Venter J.C."/>
            <person name="Davis R.W."/>
        </authorList>
    </citation>
    <scope>NUCLEOTIDE SEQUENCE [LARGE SCALE GENOMIC DNA]</scope>
    <source>
        <strain>cv. Columbia</strain>
    </source>
</reference>
<reference key="2">
    <citation type="journal article" date="2017" name="Plant J.">
        <title>Araport11: a complete reannotation of the Arabidopsis thaliana reference genome.</title>
        <authorList>
            <person name="Cheng C.Y."/>
            <person name="Krishnakumar V."/>
            <person name="Chan A.P."/>
            <person name="Thibaud-Nissen F."/>
            <person name="Schobel S."/>
            <person name="Town C.D."/>
        </authorList>
    </citation>
    <scope>GENOME REANNOTATION</scope>
    <source>
        <strain>cv. Columbia</strain>
    </source>
</reference>
<reference key="3">
    <citation type="journal article" date="2001" name="Nucleic Acids Res.">
        <title>The Arabidopsis thaliana genome contains at least 29 active genes encoding SET domain proteins that can be assigned to four evolutionarily conserved classes.</title>
        <authorList>
            <person name="Baumbusch L.O."/>
            <person name="Thorstensen T."/>
            <person name="Krauss V."/>
            <person name="Fischer A."/>
            <person name="Naumann K."/>
            <person name="Assalkhou R."/>
            <person name="Schulz I."/>
            <person name="Reuter G."/>
            <person name="Aalen R.B."/>
        </authorList>
    </citation>
    <scope>NUCLEOTIDE SEQUENCE [MRNA] OF 85-734</scope>
    <scope>NOMENCLATURE</scope>
    <source>
        <strain>cv. C24</strain>
    </source>
</reference>
<reference key="4">
    <citation type="journal article" date="2014" name="Cell Res.">
        <title>SUVR2 is involved in transcriptional gene silencing by associating with SNF2-related chromatin-remodeling proteins in Arabidopsis.</title>
        <authorList>
            <person name="Han Y.F."/>
            <person name="Dou K."/>
            <person name="Ma Z.Y."/>
            <person name="Zhang S.W."/>
            <person name="Huang H.W."/>
            <person name="Li L."/>
            <person name="Cai T."/>
            <person name="Chen S."/>
            <person name="Zhu J.K."/>
            <person name="He X.J."/>
        </authorList>
    </citation>
    <scope>IDENTIFICATION BY MASS SPECTROMETRY</scope>
    <scope>SUBUNIT</scope>
    <scope>INTERACTION WITH SUVR2</scope>
</reference>
<protein>
    <recommendedName>
        <fullName>Probable inactive histone-lysine N-methyltransferase SUVR1</fullName>
    </recommendedName>
    <alternativeName>
        <fullName>Protein SET DOMAIN GROUP 13</fullName>
    </alternativeName>
    <alternativeName>
        <fullName>Suppressor of variegation 3-9-related protein 1</fullName>
        <shortName>Su(var)3-9-related protein 1</shortName>
    </alternativeName>
</protein>
<evidence type="ECO:0000250" key="1"/>
<evidence type="ECO:0000250" key="2">
    <source>
        <dbReference type="UniProtKB" id="Q9FNC7"/>
    </source>
</evidence>
<evidence type="ECO:0000250" key="3">
    <source>
        <dbReference type="UniProtKB" id="Q9H5I1"/>
    </source>
</evidence>
<evidence type="ECO:0000255" key="4">
    <source>
        <dbReference type="PROSITE-ProRule" id="PRU00157"/>
    </source>
</evidence>
<evidence type="ECO:0000255" key="5">
    <source>
        <dbReference type="PROSITE-ProRule" id="PRU00190"/>
    </source>
</evidence>
<evidence type="ECO:0000255" key="6">
    <source>
        <dbReference type="PROSITE-ProRule" id="PRU00913"/>
    </source>
</evidence>
<evidence type="ECO:0000256" key="7">
    <source>
        <dbReference type="SAM" id="MobiDB-lite"/>
    </source>
</evidence>
<evidence type="ECO:0000269" key="8">
    <source>
    </source>
</evidence>
<evidence type="ECO:0000305" key="9"/>
<keyword id="KW-0156">Chromatin regulator</keyword>
<keyword id="KW-0158">Chromosome</keyword>
<keyword id="KW-0479">Metal-binding</keyword>
<keyword id="KW-0489">Methyltransferase</keyword>
<keyword id="KW-0539">Nucleus</keyword>
<keyword id="KW-1185">Reference proteome</keyword>
<keyword id="KW-0943">RNA-mediated gene silencing</keyword>
<keyword id="KW-0949">S-adenosyl-L-methionine</keyword>
<keyword id="KW-0808">Transferase</keyword>
<keyword id="KW-0862">Zinc</keyword>
<comment type="function">
    <text evidence="2">Probable inactive histone-lysine methyltransferase that acts as regulator of transctiptional gene silencing independently of histone H3K9 methylation. Contributes to transcriptional gene silencing at RNA-directed DNA methylation (RdDM) target loci but also at RdDM-independent target loci.</text>
</comment>
<comment type="subunit">
    <text evidence="8">Interacts with SUVR2 and itself.</text>
</comment>
<comment type="subcellular location">
    <subcellularLocation>
        <location evidence="2">Nucleus</location>
    </subcellularLocation>
    <subcellularLocation>
        <location evidence="2">Chromosome</location>
    </subcellularLocation>
</comment>
<comment type="domain">
    <text evidence="1">In the pre-SET domain, Cys residues bind 3 zinc ions that are arranged in a triangular cluster; some of these Cys residues contribute to the binding of two zinc ions within the cluster.</text>
</comment>
<comment type="similarity">
    <text evidence="6">Belongs to the class V-like SAM-binding methyltransferase superfamily. Histone-lysine methyltransferase family.</text>
</comment>
<comment type="sequence caution" evidence="9">
    <conflict type="erroneous gene model prediction">
        <sequence resource="EMBL-CDS" id="AAC16755"/>
    </conflict>
</comment>
<comment type="sequence caution" evidence="9">
    <conflict type="erroneous initiation">
        <sequence resource="EMBL-CDS" id="AAK77165"/>
    </conflict>
    <text>Truncated N-terminus.</text>
</comment>